<organism>
    <name type="scientific">Cereibacter sphaeroides (strain ATCC 17029 / ATH 2.4.9)</name>
    <name type="common">Rhodobacter sphaeroides</name>
    <dbReference type="NCBI Taxonomy" id="349101"/>
    <lineage>
        <taxon>Bacteria</taxon>
        <taxon>Pseudomonadati</taxon>
        <taxon>Pseudomonadota</taxon>
        <taxon>Alphaproteobacteria</taxon>
        <taxon>Rhodobacterales</taxon>
        <taxon>Paracoccaceae</taxon>
        <taxon>Cereibacter</taxon>
    </lineage>
</organism>
<accession>A3PJ65</accession>
<keyword id="KW-0963">Cytoplasm</keyword>
<keyword id="KW-0444">Lipid biosynthesis</keyword>
<keyword id="KW-0443">Lipid metabolism</keyword>
<keyword id="KW-0594">Phospholipid biosynthesis</keyword>
<keyword id="KW-1208">Phospholipid metabolism</keyword>
<keyword id="KW-0808">Transferase</keyword>
<sequence length="370" mass="38483">MASETAFQATGAGRIVISVDAMGGDRGPAAVVAGLAESASAIPGAYFIVHGDEVHLGPMIAKRKDLKGRCEIRHAPRVVTMNDKPSQVMRHGEGTSMWSCIESVRAGEATVAVSCGNTGALMAVSMIRLRKLPGVNRPAIACMWPSRNPGGFNVMLDVGADIKADAEDLAQYALMGASYARNGLSLERPRVGLLNVGTEEHKGRAELKVAQDLISANAAAGAYEFVGFIEGGDIPGRRCDVIVTDGFTGNVALKTGEGTAKLISDFLREAFGANILSKMAAILALGSLKRLQKRIDPRRVNGGVFLGLNGTVVKSHGSADGTGVAAAIALAARLAQSGFHERLAARLASAGRAGQDAPDEMAAPGRSEKR</sequence>
<feature type="chain" id="PRO_1000001816" description="Phosphate acyltransferase">
    <location>
        <begin position="1"/>
        <end position="370"/>
    </location>
</feature>
<feature type="region of interest" description="Disordered" evidence="2">
    <location>
        <begin position="349"/>
        <end position="370"/>
    </location>
</feature>
<name>PLSX_CERS1</name>
<evidence type="ECO:0000255" key="1">
    <source>
        <dbReference type="HAMAP-Rule" id="MF_00019"/>
    </source>
</evidence>
<evidence type="ECO:0000256" key="2">
    <source>
        <dbReference type="SAM" id="MobiDB-lite"/>
    </source>
</evidence>
<reference key="1">
    <citation type="submission" date="2007-02" db="EMBL/GenBank/DDBJ databases">
        <title>Complete sequence of chromosome 1 of Rhodobacter sphaeroides ATCC 17029.</title>
        <authorList>
            <person name="Copeland A."/>
            <person name="Lucas S."/>
            <person name="Lapidus A."/>
            <person name="Barry K."/>
            <person name="Detter J.C."/>
            <person name="Glavina del Rio T."/>
            <person name="Hammon N."/>
            <person name="Israni S."/>
            <person name="Dalin E."/>
            <person name="Tice H."/>
            <person name="Pitluck S."/>
            <person name="Kiss H."/>
            <person name="Brettin T."/>
            <person name="Bruce D."/>
            <person name="Han C."/>
            <person name="Tapia R."/>
            <person name="Gilna P."/>
            <person name="Schmutz J."/>
            <person name="Larimer F."/>
            <person name="Land M."/>
            <person name="Hauser L."/>
            <person name="Kyrpides N."/>
            <person name="Mikhailova N."/>
            <person name="Richardson P."/>
            <person name="Mackenzie C."/>
            <person name="Choudhary M."/>
            <person name="Donohue T.J."/>
            <person name="Kaplan S."/>
        </authorList>
    </citation>
    <scope>NUCLEOTIDE SEQUENCE [LARGE SCALE GENOMIC DNA]</scope>
    <source>
        <strain>ATCC 17029 / ATH 2.4.9</strain>
    </source>
</reference>
<gene>
    <name evidence="1" type="primary">plsX</name>
    <name type="ordered locus">Rsph17029_1271</name>
</gene>
<protein>
    <recommendedName>
        <fullName evidence="1">Phosphate acyltransferase</fullName>
        <ecNumber evidence="1">2.3.1.274</ecNumber>
    </recommendedName>
    <alternativeName>
        <fullName evidence="1">Acyl-ACP phosphotransacylase</fullName>
    </alternativeName>
    <alternativeName>
        <fullName evidence="1">Acyl-[acyl-carrier-protein]--phosphate acyltransferase</fullName>
    </alternativeName>
    <alternativeName>
        <fullName evidence="1">Phosphate-acyl-ACP acyltransferase</fullName>
    </alternativeName>
</protein>
<dbReference type="EC" id="2.3.1.274" evidence="1"/>
<dbReference type="EMBL" id="CP000577">
    <property type="protein sequence ID" value="ABN76381.1"/>
    <property type="molecule type" value="Genomic_DNA"/>
</dbReference>
<dbReference type="RefSeq" id="WP_011840910.1">
    <property type="nucleotide sequence ID" value="NC_009049.1"/>
</dbReference>
<dbReference type="SMR" id="A3PJ65"/>
<dbReference type="KEGG" id="rsh:Rsph17029_1271"/>
<dbReference type="HOGENOM" id="CLU_039379_1_0_5"/>
<dbReference type="UniPathway" id="UPA00085"/>
<dbReference type="GO" id="GO:0005737">
    <property type="term" value="C:cytoplasm"/>
    <property type="evidence" value="ECO:0007669"/>
    <property type="project" value="UniProtKB-SubCell"/>
</dbReference>
<dbReference type="GO" id="GO:0043811">
    <property type="term" value="F:phosphate:acyl-[acyl carrier protein] acyltransferase activity"/>
    <property type="evidence" value="ECO:0007669"/>
    <property type="project" value="UniProtKB-UniRule"/>
</dbReference>
<dbReference type="GO" id="GO:0006633">
    <property type="term" value="P:fatty acid biosynthetic process"/>
    <property type="evidence" value="ECO:0007669"/>
    <property type="project" value="UniProtKB-UniRule"/>
</dbReference>
<dbReference type="GO" id="GO:0008654">
    <property type="term" value="P:phospholipid biosynthetic process"/>
    <property type="evidence" value="ECO:0007669"/>
    <property type="project" value="UniProtKB-KW"/>
</dbReference>
<dbReference type="Gene3D" id="3.40.718.10">
    <property type="entry name" value="Isopropylmalate Dehydrogenase"/>
    <property type="match status" value="1"/>
</dbReference>
<dbReference type="HAMAP" id="MF_00019">
    <property type="entry name" value="PlsX"/>
    <property type="match status" value="1"/>
</dbReference>
<dbReference type="InterPro" id="IPR003664">
    <property type="entry name" value="FA_synthesis"/>
</dbReference>
<dbReference type="InterPro" id="IPR012281">
    <property type="entry name" value="Phospholipid_synth_PlsX-like"/>
</dbReference>
<dbReference type="NCBIfam" id="TIGR00182">
    <property type="entry name" value="plsX"/>
    <property type="match status" value="1"/>
</dbReference>
<dbReference type="PANTHER" id="PTHR30100">
    <property type="entry name" value="FATTY ACID/PHOSPHOLIPID SYNTHESIS PROTEIN PLSX"/>
    <property type="match status" value="1"/>
</dbReference>
<dbReference type="PANTHER" id="PTHR30100:SF1">
    <property type="entry name" value="PHOSPHATE ACYLTRANSFERASE"/>
    <property type="match status" value="1"/>
</dbReference>
<dbReference type="Pfam" id="PF02504">
    <property type="entry name" value="FA_synthesis"/>
    <property type="match status" value="1"/>
</dbReference>
<dbReference type="PIRSF" id="PIRSF002465">
    <property type="entry name" value="Phsphlp_syn_PlsX"/>
    <property type="match status" value="1"/>
</dbReference>
<dbReference type="SUPFAM" id="SSF53659">
    <property type="entry name" value="Isocitrate/Isopropylmalate dehydrogenase-like"/>
    <property type="match status" value="1"/>
</dbReference>
<proteinExistence type="inferred from homology"/>
<comment type="function">
    <text evidence="1">Catalyzes the reversible formation of acyl-phosphate (acyl-PO(4)) from acyl-[acyl-carrier-protein] (acyl-ACP). This enzyme utilizes acyl-ACP as fatty acyl donor, but not acyl-CoA.</text>
</comment>
<comment type="catalytic activity">
    <reaction evidence="1">
        <text>a fatty acyl-[ACP] + phosphate = an acyl phosphate + holo-[ACP]</text>
        <dbReference type="Rhea" id="RHEA:42292"/>
        <dbReference type="Rhea" id="RHEA-COMP:9685"/>
        <dbReference type="Rhea" id="RHEA-COMP:14125"/>
        <dbReference type="ChEBI" id="CHEBI:43474"/>
        <dbReference type="ChEBI" id="CHEBI:59918"/>
        <dbReference type="ChEBI" id="CHEBI:64479"/>
        <dbReference type="ChEBI" id="CHEBI:138651"/>
        <dbReference type="EC" id="2.3.1.274"/>
    </reaction>
</comment>
<comment type="pathway">
    <text evidence="1">Lipid metabolism; phospholipid metabolism.</text>
</comment>
<comment type="subunit">
    <text evidence="1">Homodimer. Probably interacts with PlsY.</text>
</comment>
<comment type="subcellular location">
    <subcellularLocation>
        <location evidence="1">Cytoplasm</location>
    </subcellularLocation>
    <text evidence="1">Associated with the membrane possibly through PlsY.</text>
</comment>
<comment type="similarity">
    <text evidence="1">Belongs to the PlsX family.</text>
</comment>